<sequence>MSSRVCPQRPVAKSSGDAKVLLIVSTYKPRAAVLAADVVNFLSIRGFQCHTIEYDGLNKESCARAGYMFAVSIGGDGTTLFAARCASPSGIPILAINLGRFGFIAPIEPRYWQQALSDYLAGGVRPAERALISCTVTRAGKEIASCLALNDVVLSSGRVARLTRAEVCFNDISFGVYEADGIILATPTGSTAYSAACGGPILDPDLDAFVLTPISALCLSNRPVVVPSSGVVRIKVLSMRHKETVLSVDGHELCTLQEEDQLLASRSSCSARLVFCTPHVFYHALCSKLAWSGSIFSRRGRRHDD</sequence>
<protein>
    <recommendedName>
        <fullName evidence="1">NAD kinase</fullName>
        <ecNumber evidence="1">2.7.1.23</ecNumber>
    </recommendedName>
    <alternativeName>
        <fullName evidence="1">ATP-dependent NAD kinase</fullName>
    </alternativeName>
</protein>
<comment type="function">
    <text evidence="1">Involved in the regulation of the intracellular balance of NAD and NADP, and is a key enzyme in the biosynthesis of NADP. Catalyzes specifically the phosphorylation on 2'-hydroxyl of the adenosine moiety of NAD to yield NADP.</text>
</comment>
<comment type="catalytic activity">
    <reaction evidence="1">
        <text>NAD(+) + ATP = ADP + NADP(+) + H(+)</text>
        <dbReference type="Rhea" id="RHEA:18629"/>
        <dbReference type="ChEBI" id="CHEBI:15378"/>
        <dbReference type="ChEBI" id="CHEBI:30616"/>
        <dbReference type="ChEBI" id="CHEBI:57540"/>
        <dbReference type="ChEBI" id="CHEBI:58349"/>
        <dbReference type="ChEBI" id="CHEBI:456216"/>
        <dbReference type="EC" id="2.7.1.23"/>
    </reaction>
</comment>
<comment type="cofactor">
    <cofactor evidence="1">
        <name>a divalent metal cation</name>
        <dbReference type="ChEBI" id="CHEBI:60240"/>
    </cofactor>
</comment>
<comment type="subcellular location">
    <subcellularLocation>
        <location evidence="1">Cytoplasm</location>
    </subcellularLocation>
</comment>
<comment type="similarity">
    <text evidence="1">Belongs to the NAD kinase family.</text>
</comment>
<keyword id="KW-0067">ATP-binding</keyword>
<keyword id="KW-0963">Cytoplasm</keyword>
<keyword id="KW-0418">Kinase</keyword>
<keyword id="KW-0520">NAD</keyword>
<keyword id="KW-0521">NADP</keyword>
<keyword id="KW-0547">Nucleotide-binding</keyword>
<keyword id="KW-0808">Transferase</keyword>
<name>NADK_TREPS</name>
<proteinExistence type="inferred from homology"/>
<organism>
    <name type="scientific">Treponema pallidum subsp. pallidum (strain SS14)</name>
    <dbReference type="NCBI Taxonomy" id="455434"/>
    <lineage>
        <taxon>Bacteria</taxon>
        <taxon>Pseudomonadati</taxon>
        <taxon>Spirochaetota</taxon>
        <taxon>Spirochaetia</taxon>
        <taxon>Spirochaetales</taxon>
        <taxon>Treponemataceae</taxon>
        <taxon>Treponema</taxon>
    </lineage>
</organism>
<accession>B2S337</accession>
<gene>
    <name evidence="1" type="primary">nadK</name>
    <name type="ordered locus">TPASS_0441</name>
</gene>
<dbReference type="EC" id="2.7.1.23" evidence="1"/>
<dbReference type="EMBL" id="CP000805">
    <property type="protein sequence ID" value="ACD70866.1"/>
    <property type="molecule type" value="Genomic_DNA"/>
</dbReference>
<dbReference type="RefSeq" id="WP_010881889.1">
    <property type="nucleotide sequence ID" value="NC_021508.1"/>
</dbReference>
<dbReference type="SMR" id="B2S337"/>
<dbReference type="KEGG" id="tpp:TPASS_0441"/>
<dbReference type="PATRIC" id="fig|455434.6.peg.441"/>
<dbReference type="Proteomes" id="UP000001202">
    <property type="component" value="Chromosome"/>
</dbReference>
<dbReference type="GO" id="GO:0005737">
    <property type="term" value="C:cytoplasm"/>
    <property type="evidence" value="ECO:0007669"/>
    <property type="project" value="UniProtKB-SubCell"/>
</dbReference>
<dbReference type="GO" id="GO:0005524">
    <property type="term" value="F:ATP binding"/>
    <property type="evidence" value="ECO:0007669"/>
    <property type="project" value="UniProtKB-KW"/>
</dbReference>
<dbReference type="GO" id="GO:0046872">
    <property type="term" value="F:metal ion binding"/>
    <property type="evidence" value="ECO:0007669"/>
    <property type="project" value="UniProtKB-UniRule"/>
</dbReference>
<dbReference type="GO" id="GO:0051287">
    <property type="term" value="F:NAD binding"/>
    <property type="evidence" value="ECO:0007669"/>
    <property type="project" value="UniProtKB-ARBA"/>
</dbReference>
<dbReference type="GO" id="GO:0003951">
    <property type="term" value="F:NAD+ kinase activity"/>
    <property type="evidence" value="ECO:0007669"/>
    <property type="project" value="UniProtKB-UniRule"/>
</dbReference>
<dbReference type="GO" id="GO:0019674">
    <property type="term" value="P:NAD metabolic process"/>
    <property type="evidence" value="ECO:0007669"/>
    <property type="project" value="InterPro"/>
</dbReference>
<dbReference type="GO" id="GO:0006741">
    <property type="term" value="P:NADP biosynthetic process"/>
    <property type="evidence" value="ECO:0007669"/>
    <property type="project" value="UniProtKB-UniRule"/>
</dbReference>
<dbReference type="Gene3D" id="3.40.50.10330">
    <property type="entry name" value="Probable inorganic polyphosphate/atp-NAD kinase, domain 1"/>
    <property type="match status" value="1"/>
</dbReference>
<dbReference type="Gene3D" id="2.60.200.30">
    <property type="entry name" value="Probable inorganic polyphosphate/atp-NAD kinase, domain 2"/>
    <property type="match status" value="1"/>
</dbReference>
<dbReference type="HAMAP" id="MF_00361">
    <property type="entry name" value="NAD_kinase"/>
    <property type="match status" value="1"/>
</dbReference>
<dbReference type="InterPro" id="IPR017438">
    <property type="entry name" value="ATP-NAD_kinase_N"/>
</dbReference>
<dbReference type="InterPro" id="IPR017437">
    <property type="entry name" value="ATP-NAD_kinase_PpnK-typ_C"/>
</dbReference>
<dbReference type="InterPro" id="IPR016064">
    <property type="entry name" value="NAD/diacylglycerol_kinase_sf"/>
</dbReference>
<dbReference type="InterPro" id="IPR002504">
    <property type="entry name" value="NADK"/>
</dbReference>
<dbReference type="PANTHER" id="PTHR20275">
    <property type="entry name" value="NAD KINASE"/>
    <property type="match status" value="1"/>
</dbReference>
<dbReference type="PANTHER" id="PTHR20275:SF0">
    <property type="entry name" value="NAD KINASE"/>
    <property type="match status" value="1"/>
</dbReference>
<dbReference type="Pfam" id="PF01513">
    <property type="entry name" value="NAD_kinase"/>
    <property type="match status" value="1"/>
</dbReference>
<dbReference type="Pfam" id="PF20143">
    <property type="entry name" value="NAD_kinase_C"/>
    <property type="match status" value="1"/>
</dbReference>
<dbReference type="SUPFAM" id="SSF111331">
    <property type="entry name" value="NAD kinase/diacylglycerol kinase-like"/>
    <property type="match status" value="1"/>
</dbReference>
<reference key="1">
    <citation type="journal article" date="2008" name="BMC Microbiol.">
        <title>Complete genome sequence of Treponema pallidum ssp. pallidum strain SS14 determined with oligonucleotide arrays.</title>
        <authorList>
            <person name="Matejkova P."/>
            <person name="Strouhal M."/>
            <person name="Smajs D."/>
            <person name="Norris S.J."/>
            <person name="Palzkill T."/>
            <person name="Petrosino J.F."/>
            <person name="Sodergren E."/>
            <person name="Norton J.E."/>
            <person name="Singh J."/>
            <person name="Richmond T.A."/>
            <person name="Molla M.N."/>
            <person name="Albert T.J."/>
            <person name="Weinstock G.M."/>
        </authorList>
    </citation>
    <scope>NUCLEOTIDE SEQUENCE [LARGE SCALE GENOMIC DNA]</scope>
    <source>
        <strain>SS14</strain>
    </source>
</reference>
<evidence type="ECO:0000255" key="1">
    <source>
        <dbReference type="HAMAP-Rule" id="MF_00361"/>
    </source>
</evidence>
<feature type="chain" id="PRO_1000120897" description="NAD kinase">
    <location>
        <begin position="1"/>
        <end position="305"/>
    </location>
</feature>
<feature type="active site" description="Proton acceptor" evidence="1">
    <location>
        <position position="76"/>
    </location>
</feature>
<feature type="binding site" evidence="1">
    <location>
        <begin position="76"/>
        <end position="77"/>
    </location>
    <ligand>
        <name>NAD(+)</name>
        <dbReference type="ChEBI" id="CHEBI:57540"/>
    </ligand>
</feature>
<feature type="binding site" evidence="1">
    <location>
        <begin position="150"/>
        <end position="151"/>
    </location>
    <ligand>
        <name>NAD(+)</name>
        <dbReference type="ChEBI" id="CHEBI:57540"/>
    </ligand>
</feature>
<feature type="binding site" evidence="1">
    <location>
        <position position="161"/>
    </location>
    <ligand>
        <name>NAD(+)</name>
        <dbReference type="ChEBI" id="CHEBI:57540"/>
    </ligand>
</feature>
<feature type="binding site" evidence="1">
    <location>
        <position position="180"/>
    </location>
    <ligand>
        <name>NAD(+)</name>
        <dbReference type="ChEBI" id="CHEBI:57540"/>
    </ligand>
</feature>